<name>HIS6_PSEF5</name>
<feature type="chain" id="PRO_0000142208" description="Imidazole glycerol phosphate synthase subunit HisF">
    <location>
        <begin position="1"/>
        <end position="256"/>
    </location>
</feature>
<feature type="active site" evidence="1">
    <location>
        <position position="12"/>
    </location>
</feature>
<feature type="active site" evidence="1">
    <location>
        <position position="131"/>
    </location>
</feature>
<sequence length="256" mass="27166">MALAKRIIPCLDVDNGRVVKGVKFENIRDAGDPVEIARRYDEQGADEITFLDITASVDGRDTTLHTVERMASQVFIPLTVGGGVRTVQDIRNLLNAGADKVSINTAAVFNPEFVGEAAQHFGSQCIVVAIDAKKVSGPGEAPRWEIFTHGGRKPTGLDAVEWAKKMEGLGAGEILLTSMDQDGMKNGFDLGVTRAISDALGIPVIASGGVGNLQHLADGIIEGHASAVLAASIFHFGEYTVPEAKAYMAQRGIVVR</sequence>
<dbReference type="EC" id="4.3.2.10" evidence="1"/>
<dbReference type="EMBL" id="CP000076">
    <property type="protein sequence ID" value="AAY95774.1"/>
    <property type="molecule type" value="Genomic_DNA"/>
</dbReference>
<dbReference type="RefSeq" id="WP_011058740.1">
    <property type="nucleotide sequence ID" value="NC_004129.6"/>
</dbReference>
<dbReference type="SMR" id="Q4KJS4"/>
<dbReference type="STRING" id="220664.PFL_0365"/>
<dbReference type="KEGG" id="pfl:PFL_0365"/>
<dbReference type="PATRIC" id="fig|220664.5.peg.373"/>
<dbReference type="eggNOG" id="COG0107">
    <property type="taxonomic scope" value="Bacteria"/>
</dbReference>
<dbReference type="HOGENOM" id="CLU_048577_4_0_6"/>
<dbReference type="UniPathway" id="UPA00031">
    <property type="reaction ID" value="UER00010"/>
</dbReference>
<dbReference type="Proteomes" id="UP000008540">
    <property type="component" value="Chromosome"/>
</dbReference>
<dbReference type="GO" id="GO:0005737">
    <property type="term" value="C:cytoplasm"/>
    <property type="evidence" value="ECO:0007669"/>
    <property type="project" value="UniProtKB-SubCell"/>
</dbReference>
<dbReference type="GO" id="GO:0000107">
    <property type="term" value="F:imidazoleglycerol-phosphate synthase activity"/>
    <property type="evidence" value="ECO:0007669"/>
    <property type="project" value="UniProtKB-UniRule"/>
</dbReference>
<dbReference type="GO" id="GO:0016829">
    <property type="term" value="F:lyase activity"/>
    <property type="evidence" value="ECO:0007669"/>
    <property type="project" value="UniProtKB-KW"/>
</dbReference>
<dbReference type="GO" id="GO:0000105">
    <property type="term" value="P:L-histidine biosynthetic process"/>
    <property type="evidence" value="ECO:0007669"/>
    <property type="project" value="UniProtKB-UniRule"/>
</dbReference>
<dbReference type="CDD" id="cd04731">
    <property type="entry name" value="HisF"/>
    <property type="match status" value="1"/>
</dbReference>
<dbReference type="FunFam" id="3.20.20.70:FF:000006">
    <property type="entry name" value="Imidazole glycerol phosphate synthase subunit HisF"/>
    <property type="match status" value="1"/>
</dbReference>
<dbReference type="Gene3D" id="3.20.20.70">
    <property type="entry name" value="Aldolase class I"/>
    <property type="match status" value="1"/>
</dbReference>
<dbReference type="HAMAP" id="MF_01013">
    <property type="entry name" value="HisF"/>
    <property type="match status" value="1"/>
</dbReference>
<dbReference type="InterPro" id="IPR013785">
    <property type="entry name" value="Aldolase_TIM"/>
</dbReference>
<dbReference type="InterPro" id="IPR006062">
    <property type="entry name" value="His_biosynth"/>
</dbReference>
<dbReference type="InterPro" id="IPR004651">
    <property type="entry name" value="HisF"/>
</dbReference>
<dbReference type="InterPro" id="IPR050064">
    <property type="entry name" value="IGPS_HisA/HisF"/>
</dbReference>
<dbReference type="InterPro" id="IPR011060">
    <property type="entry name" value="RibuloseP-bd_barrel"/>
</dbReference>
<dbReference type="NCBIfam" id="TIGR00735">
    <property type="entry name" value="hisF"/>
    <property type="match status" value="1"/>
</dbReference>
<dbReference type="PANTHER" id="PTHR21235:SF2">
    <property type="entry name" value="IMIDAZOLE GLYCEROL PHOSPHATE SYNTHASE HISHF"/>
    <property type="match status" value="1"/>
</dbReference>
<dbReference type="PANTHER" id="PTHR21235">
    <property type="entry name" value="IMIDAZOLE GLYCEROL PHOSPHATE SYNTHASE SUBUNIT HISF/H IGP SYNTHASE SUBUNIT HISF/H"/>
    <property type="match status" value="1"/>
</dbReference>
<dbReference type="Pfam" id="PF00977">
    <property type="entry name" value="His_biosynth"/>
    <property type="match status" value="1"/>
</dbReference>
<dbReference type="SUPFAM" id="SSF51366">
    <property type="entry name" value="Ribulose-phoshate binding barrel"/>
    <property type="match status" value="1"/>
</dbReference>
<gene>
    <name evidence="1" type="primary">hisF</name>
    <name type="ordered locus">PFL_0365</name>
</gene>
<accession>Q4KJS4</accession>
<comment type="function">
    <text evidence="1">IGPS catalyzes the conversion of PRFAR and glutamine to IGP, AICAR and glutamate. The HisF subunit catalyzes the cyclization activity that produces IGP and AICAR from PRFAR using the ammonia provided by the HisH subunit.</text>
</comment>
<comment type="catalytic activity">
    <reaction evidence="1">
        <text>5-[(5-phospho-1-deoxy-D-ribulos-1-ylimino)methylamino]-1-(5-phospho-beta-D-ribosyl)imidazole-4-carboxamide + L-glutamine = D-erythro-1-(imidazol-4-yl)glycerol 3-phosphate + 5-amino-1-(5-phospho-beta-D-ribosyl)imidazole-4-carboxamide + L-glutamate + H(+)</text>
        <dbReference type="Rhea" id="RHEA:24793"/>
        <dbReference type="ChEBI" id="CHEBI:15378"/>
        <dbReference type="ChEBI" id="CHEBI:29985"/>
        <dbReference type="ChEBI" id="CHEBI:58278"/>
        <dbReference type="ChEBI" id="CHEBI:58359"/>
        <dbReference type="ChEBI" id="CHEBI:58475"/>
        <dbReference type="ChEBI" id="CHEBI:58525"/>
        <dbReference type="EC" id="4.3.2.10"/>
    </reaction>
</comment>
<comment type="pathway">
    <text evidence="1">Amino-acid biosynthesis; L-histidine biosynthesis; L-histidine from 5-phospho-alpha-D-ribose 1-diphosphate: step 5/9.</text>
</comment>
<comment type="subunit">
    <text evidence="1">Heterodimer of HisH and HisF.</text>
</comment>
<comment type="subcellular location">
    <subcellularLocation>
        <location evidence="1">Cytoplasm</location>
    </subcellularLocation>
</comment>
<comment type="similarity">
    <text evidence="1">Belongs to the HisA/HisF family.</text>
</comment>
<protein>
    <recommendedName>
        <fullName evidence="1">Imidazole glycerol phosphate synthase subunit HisF</fullName>
        <ecNumber evidence="1">4.3.2.10</ecNumber>
    </recommendedName>
    <alternativeName>
        <fullName evidence="1">IGP synthase cyclase subunit</fullName>
    </alternativeName>
    <alternativeName>
        <fullName evidence="1">IGP synthase subunit HisF</fullName>
    </alternativeName>
    <alternativeName>
        <fullName evidence="1">ImGP synthase subunit HisF</fullName>
        <shortName evidence="1">IGPS subunit HisF</shortName>
    </alternativeName>
</protein>
<keyword id="KW-0028">Amino-acid biosynthesis</keyword>
<keyword id="KW-0963">Cytoplasm</keyword>
<keyword id="KW-0368">Histidine biosynthesis</keyword>
<keyword id="KW-0456">Lyase</keyword>
<evidence type="ECO:0000255" key="1">
    <source>
        <dbReference type="HAMAP-Rule" id="MF_01013"/>
    </source>
</evidence>
<organism>
    <name type="scientific">Pseudomonas fluorescens (strain ATCC BAA-477 / NRRL B-23932 / Pf-5)</name>
    <dbReference type="NCBI Taxonomy" id="220664"/>
    <lineage>
        <taxon>Bacteria</taxon>
        <taxon>Pseudomonadati</taxon>
        <taxon>Pseudomonadota</taxon>
        <taxon>Gammaproteobacteria</taxon>
        <taxon>Pseudomonadales</taxon>
        <taxon>Pseudomonadaceae</taxon>
        <taxon>Pseudomonas</taxon>
    </lineage>
</organism>
<reference key="1">
    <citation type="journal article" date="2005" name="Nat. Biotechnol.">
        <title>Complete genome sequence of the plant commensal Pseudomonas fluorescens Pf-5.</title>
        <authorList>
            <person name="Paulsen I.T."/>
            <person name="Press C.M."/>
            <person name="Ravel J."/>
            <person name="Kobayashi D.Y."/>
            <person name="Myers G.S.A."/>
            <person name="Mavrodi D.V."/>
            <person name="DeBoy R.T."/>
            <person name="Seshadri R."/>
            <person name="Ren Q."/>
            <person name="Madupu R."/>
            <person name="Dodson R.J."/>
            <person name="Durkin A.S."/>
            <person name="Brinkac L.M."/>
            <person name="Daugherty S.C."/>
            <person name="Sullivan S.A."/>
            <person name="Rosovitz M.J."/>
            <person name="Gwinn M.L."/>
            <person name="Zhou L."/>
            <person name="Schneider D.J."/>
            <person name="Cartinhour S.W."/>
            <person name="Nelson W.C."/>
            <person name="Weidman J."/>
            <person name="Watkins K."/>
            <person name="Tran K."/>
            <person name="Khouri H."/>
            <person name="Pierson E.A."/>
            <person name="Pierson L.S. III"/>
            <person name="Thomashow L.S."/>
            <person name="Loper J.E."/>
        </authorList>
    </citation>
    <scope>NUCLEOTIDE SEQUENCE [LARGE SCALE GENOMIC DNA]</scope>
    <source>
        <strain>ATCC BAA-477 / NRRL B-23932 / Pf-5</strain>
    </source>
</reference>
<proteinExistence type="inferred from homology"/>